<comment type="miscellaneous">
    <text>This alpha chain was isolated from a myeloma protein that has anti-dinitrophenyl activity.</text>
</comment>
<proteinExistence type="evidence at protein level"/>
<feature type="signal peptide" evidence="2 3">
    <location>
        <begin position="1"/>
        <end position="18"/>
    </location>
</feature>
<feature type="chain" id="PRO_0000015232" description="Ig heavy chain V region MOPC 315">
    <location>
        <begin position="19"/>
        <end position="137"/>
    </location>
</feature>
<feature type="region of interest" description="Framework-1">
    <location>
        <begin position="19"/>
        <end position="48"/>
    </location>
</feature>
<feature type="region of interest" description="Complementarity-determining-1">
    <location>
        <begin position="49"/>
        <end position="54"/>
    </location>
</feature>
<feature type="region of interest" description="Framework-2">
    <location>
        <begin position="55"/>
        <end position="68"/>
    </location>
</feature>
<feature type="region of interest" description="Complementarity-determining-2">
    <location>
        <begin position="69"/>
        <end position="84"/>
    </location>
</feature>
<feature type="region of interest" description="Framework-3">
    <location>
        <begin position="85"/>
        <end position="116"/>
    </location>
</feature>
<feature type="region of interest" description="Complementarity-determining-3">
    <location>
        <begin position="117"/>
        <end position="126"/>
    </location>
</feature>
<feature type="region of interest" description="Framework-4">
    <location>
        <begin position="127"/>
        <end position="137"/>
    </location>
</feature>
<feature type="disulfide bond" evidence="1">
    <location>
        <begin position="40"/>
        <end position="114"/>
    </location>
</feature>
<feature type="sequence conflict" description="In Ref. 1; CAA30727." evidence="4" ref="1">
    <original>G</original>
    <variation>GG</variation>
    <location>
        <position position="15"/>
    </location>
</feature>
<feature type="sequence conflict" description="In Ref. 2; AA sequence." evidence="4" ref="2">
    <original>G</original>
    <variation>H</variation>
    <location>
        <position position="15"/>
    </location>
</feature>
<feature type="sequence conflict" description="In Ref. 4; AA sequence." evidence="4" ref="4">
    <original>GY</original>
    <variation>YG</variation>
    <location>
        <begin position="77"/>
        <end position="78"/>
    </location>
</feature>
<feature type="sequence conflict" description="In Ref. 4; AA sequence." evidence="4" ref="4">
    <original>N</original>
    <variation>D</variation>
    <location>
        <position position="102"/>
    </location>
</feature>
<feature type="sequence conflict" description="In Ref. 4; AA sequence." evidence="4" ref="4">
    <location>
        <position position="123"/>
    </location>
</feature>
<feature type="non-terminal residue">
    <location>
        <position position="137"/>
    </location>
</feature>
<keyword id="KW-1064">Adaptive immunity</keyword>
<keyword id="KW-0903">Direct protein sequencing</keyword>
<keyword id="KW-1015">Disulfide bond</keyword>
<keyword id="KW-0391">Immunity</keyword>
<keyword id="KW-1280">Immunoglobulin</keyword>
<keyword id="KW-1185">Reference proteome</keyword>
<keyword id="KW-0732">Signal</keyword>
<organism>
    <name type="scientific">Mus musculus</name>
    <name type="common">Mouse</name>
    <dbReference type="NCBI Taxonomy" id="10090"/>
    <lineage>
        <taxon>Eukaryota</taxon>
        <taxon>Metazoa</taxon>
        <taxon>Chordata</taxon>
        <taxon>Craniata</taxon>
        <taxon>Vertebrata</taxon>
        <taxon>Euteleostomi</taxon>
        <taxon>Mammalia</taxon>
        <taxon>Eutheria</taxon>
        <taxon>Euarchontoglires</taxon>
        <taxon>Glires</taxon>
        <taxon>Rodentia</taxon>
        <taxon>Myomorpha</taxon>
        <taxon>Muroidea</taxon>
        <taxon>Muridae</taxon>
        <taxon>Murinae</taxon>
        <taxon>Mus</taxon>
        <taxon>Mus</taxon>
    </lineage>
</organism>
<sequence>MKVLSLLYLLTAIPGIMSDVQLQESGPGLVKPSQSLSLTCSVTGYSITSGYFWNWIRQFPGNKLEWLGFIKYDGSNGYNPSLKNRVSITRDTSENQFFLKLNSVTTEDTATYYCAGDNDHLYYFDYWGQGTTLTVSS</sequence>
<accession>P01822</accession>
<evidence type="ECO:0000255" key="1">
    <source>
        <dbReference type="PROSITE-ProRule" id="PRU00114"/>
    </source>
</evidence>
<evidence type="ECO:0000269" key="2">
    <source>
    </source>
</evidence>
<evidence type="ECO:0000269" key="3">
    <source>
    </source>
</evidence>
<evidence type="ECO:0000305" key="4"/>
<protein>
    <recommendedName>
        <fullName>Ig heavy chain V region MOPC 315</fullName>
    </recommendedName>
</protein>
<dbReference type="EMBL" id="M27638">
    <property type="protein sequence ID" value="AAA61337.1"/>
    <property type="molecule type" value="Genomic_DNA"/>
</dbReference>
<dbReference type="EMBL" id="X07880">
    <property type="protein sequence ID" value="CAA30727.1"/>
    <property type="molecule type" value="Genomic_DNA"/>
</dbReference>
<dbReference type="PIR" id="PL0102">
    <property type="entry name" value="AVMS35"/>
</dbReference>
<dbReference type="SMR" id="P01822"/>
<dbReference type="FunCoup" id="P01822">
    <property type="interactions" value="615"/>
</dbReference>
<dbReference type="InParanoid" id="P01822"/>
<dbReference type="Proteomes" id="UP000000589">
    <property type="component" value="Unplaced"/>
</dbReference>
<dbReference type="RNAct" id="P01822">
    <property type="molecule type" value="protein"/>
</dbReference>
<dbReference type="GO" id="GO:0005576">
    <property type="term" value="C:extracellular region"/>
    <property type="evidence" value="ECO:0007669"/>
    <property type="project" value="UniProtKB-ARBA"/>
</dbReference>
<dbReference type="GO" id="GO:0019814">
    <property type="term" value="C:immunoglobulin complex"/>
    <property type="evidence" value="ECO:0007669"/>
    <property type="project" value="UniProtKB-KW"/>
</dbReference>
<dbReference type="GO" id="GO:0003823">
    <property type="term" value="F:antigen binding"/>
    <property type="evidence" value="ECO:0000318"/>
    <property type="project" value="GO_Central"/>
</dbReference>
<dbReference type="GO" id="GO:0016064">
    <property type="term" value="P:immunoglobulin mediated immune response"/>
    <property type="evidence" value="ECO:0000318"/>
    <property type="project" value="GO_Central"/>
</dbReference>
<dbReference type="CDD" id="cd04981">
    <property type="entry name" value="IgV_H"/>
    <property type="match status" value="1"/>
</dbReference>
<dbReference type="FunFam" id="2.60.40.10:FF:002253">
    <property type="entry name" value="Ig heavy chain V region 36-60"/>
    <property type="match status" value="1"/>
</dbReference>
<dbReference type="Gene3D" id="2.60.40.10">
    <property type="entry name" value="Immunoglobulins"/>
    <property type="match status" value="1"/>
</dbReference>
<dbReference type="InterPro" id="IPR007110">
    <property type="entry name" value="Ig-like_dom"/>
</dbReference>
<dbReference type="InterPro" id="IPR036179">
    <property type="entry name" value="Ig-like_dom_sf"/>
</dbReference>
<dbReference type="InterPro" id="IPR013783">
    <property type="entry name" value="Ig-like_fold"/>
</dbReference>
<dbReference type="InterPro" id="IPR003599">
    <property type="entry name" value="Ig_sub"/>
</dbReference>
<dbReference type="InterPro" id="IPR013106">
    <property type="entry name" value="Ig_V-set"/>
</dbReference>
<dbReference type="InterPro" id="IPR050199">
    <property type="entry name" value="IgHV"/>
</dbReference>
<dbReference type="PANTHER" id="PTHR23266">
    <property type="entry name" value="IMMUNOGLOBULIN HEAVY CHAIN"/>
    <property type="match status" value="1"/>
</dbReference>
<dbReference type="Pfam" id="PF07686">
    <property type="entry name" value="V-set"/>
    <property type="match status" value="1"/>
</dbReference>
<dbReference type="SMART" id="SM00409">
    <property type="entry name" value="IG"/>
    <property type="match status" value="1"/>
</dbReference>
<dbReference type="SMART" id="SM00406">
    <property type="entry name" value="IGv"/>
    <property type="match status" value="1"/>
</dbReference>
<dbReference type="SUPFAM" id="SSF48726">
    <property type="entry name" value="Immunoglobulin"/>
    <property type="match status" value="1"/>
</dbReference>
<dbReference type="PROSITE" id="PS50835">
    <property type="entry name" value="IG_LIKE"/>
    <property type="match status" value="1"/>
</dbReference>
<reference key="1">
    <citation type="journal article" date="1989" name="Mol. Immunol.">
        <title>Cloning, sequencing and expression of the rearranged MOPC 315 VH gene segment.</title>
        <authorList>
            <person name="Rinfret A."/>
            <person name="Horne C."/>
            <person name="Dorrington K.J."/>
            <person name="Klein M."/>
        </authorList>
    </citation>
    <scope>NUCLEOTIDE SEQUENCE [GENOMIC DNA]</scope>
</reference>
<reference key="2">
    <citation type="journal article" date="1977" name="Proc. Natl. Acad. Sci. U.S.A.">
        <title>Amino acid sequence of the precursor region of MOPC-315 mouse immunoglobulin heavy chain.</title>
        <authorList>
            <person name="Jilka R.L."/>
            <person name="Pestka S."/>
        </authorList>
    </citation>
    <scope>PROTEIN SEQUENCE OF 1-31 (PRECURSOR PROTEIN)</scope>
</reference>
<reference key="3">
    <citation type="journal article" date="1979" name="Fed. Proc.">
        <title>Structure and function of immunoglobulin genes and precursors.</title>
        <authorList>
            <person name="Schechter I."/>
            <person name="Wolf O."/>
            <person name="Zemell R."/>
            <person name="Burstein Y."/>
        </authorList>
    </citation>
    <scope>PROTEIN SEQUENCE OF 1-21 (PRECURSOR PROTEIN)</scope>
</reference>
<reference key="4">
    <citation type="journal article" date="1974" name="Proc. Natl. Acad. Sci. U.S.A.">
        <title>Amino-acid sequence of the variable region of the heavy (alpha) chain of a mouse myeloma protein with anti-hapten activity.</title>
        <authorList>
            <person name="Francis S.H."/>
            <person name="Leslie R.G.Q."/>
            <person name="Hood L."/>
            <person name="Eisen H.N."/>
        </authorList>
    </citation>
    <scope>PROTEIN SEQUENCE OF 19-136</scope>
</reference>
<reference key="5">
    <citation type="journal article" date="1977" name="Cold Spring Harb. Symp. Quant. Biol.">
        <title>Model-building studies of antigen-binding sites: the hapten-binding site of mopc-315.</title>
        <authorList>
            <person name="Padlan E.A."/>
            <person name="Davies D.R."/>
            <person name="Pecht I."/>
            <person name="Givol D."/>
            <person name="Wright C."/>
        </authorList>
    </citation>
    <scope>SEQUENCE REVISION TO 53</scope>
</reference>
<name>HVM46_MOUSE</name>